<sequence length="90" mass="10226">MALDSAKKAEIVAKFAKKPGDTGSTEVQVALLTARIAELTEHLKIYKKDFSSRLGLLKLVGQRKRLLSYLKRKDYNSYSKLITELNLRDK</sequence>
<proteinExistence type="inferred from homology"/>
<gene>
    <name evidence="1" type="primary">rpsO</name>
    <name type="ordered locus">CJE0964</name>
</gene>
<keyword id="KW-0687">Ribonucleoprotein</keyword>
<keyword id="KW-0689">Ribosomal protein</keyword>
<keyword id="KW-0694">RNA-binding</keyword>
<keyword id="KW-0699">rRNA-binding</keyword>
<accession>Q5HUS3</accession>
<feature type="chain" id="PRO_0000115408" description="Small ribosomal subunit protein uS15">
    <location>
        <begin position="1"/>
        <end position="90"/>
    </location>
</feature>
<name>RS15_CAMJR</name>
<organism>
    <name type="scientific">Campylobacter jejuni (strain RM1221)</name>
    <dbReference type="NCBI Taxonomy" id="195099"/>
    <lineage>
        <taxon>Bacteria</taxon>
        <taxon>Pseudomonadati</taxon>
        <taxon>Campylobacterota</taxon>
        <taxon>Epsilonproteobacteria</taxon>
        <taxon>Campylobacterales</taxon>
        <taxon>Campylobacteraceae</taxon>
        <taxon>Campylobacter</taxon>
    </lineage>
</organism>
<dbReference type="EMBL" id="CP000025">
    <property type="protein sequence ID" value="AAW35297.1"/>
    <property type="molecule type" value="Genomic_DNA"/>
</dbReference>
<dbReference type="RefSeq" id="WP_002852579.1">
    <property type="nucleotide sequence ID" value="NC_003912.7"/>
</dbReference>
<dbReference type="SMR" id="Q5HUS3"/>
<dbReference type="KEGG" id="cjr:CJE0964"/>
<dbReference type="HOGENOM" id="CLU_148518_0_0_7"/>
<dbReference type="GO" id="GO:0022627">
    <property type="term" value="C:cytosolic small ribosomal subunit"/>
    <property type="evidence" value="ECO:0007669"/>
    <property type="project" value="TreeGrafter"/>
</dbReference>
<dbReference type="GO" id="GO:0019843">
    <property type="term" value="F:rRNA binding"/>
    <property type="evidence" value="ECO:0007669"/>
    <property type="project" value="UniProtKB-UniRule"/>
</dbReference>
<dbReference type="GO" id="GO:0003735">
    <property type="term" value="F:structural constituent of ribosome"/>
    <property type="evidence" value="ECO:0007669"/>
    <property type="project" value="InterPro"/>
</dbReference>
<dbReference type="GO" id="GO:0006412">
    <property type="term" value="P:translation"/>
    <property type="evidence" value="ECO:0007669"/>
    <property type="project" value="UniProtKB-UniRule"/>
</dbReference>
<dbReference type="CDD" id="cd00353">
    <property type="entry name" value="Ribosomal_S15p_S13e"/>
    <property type="match status" value="1"/>
</dbReference>
<dbReference type="FunFam" id="1.10.287.10:FF:000002">
    <property type="entry name" value="30S ribosomal protein S15"/>
    <property type="match status" value="1"/>
</dbReference>
<dbReference type="Gene3D" id="6.10.250.3130">
    <property type="match status" value="1"/>
</dbReference>
<dbReference type="Gene3D" id="1.10.287.10">
    <property type="entry name" value="S15/NS1, RNA-binding"/>
    <property type="match status" value="1"/>
</dbReference>
<dbReference type="HAMAP" id="MF_01343_B">
    <property type="entry name" value="Ribosomal_uS15_B"/>
    <property type="match status" value="1"/>
</dbReference>
<dbReference type="InterPro" id="IPR000589">
    <property type="entry name" value="Ribosomal_uS15"/>
</dbReference>
<dbReference type="InterPro" id="IPR005290">
    <property type="entry name" value="Ribosomal_uS15_bac-type"/>
</dbReference>
<dbReference type="InterPro" id="IPR009068">
    <property type="entry name" value="uS15_NS1_RNA-bd_sf"/>
</dbReference>
<dbReference type="NCBIfam" id="TIGR00952">
    <property type="entry name" value="S15_bact"/>
    <property type="match status" value="1"/>
</dbReference>
<dbReference type="PANTHER" id="PTHR23321">
    <property type="entry name" value="RIBOSOMAL PROTEIN S15, BACTERIAL AND ORGANELLAR"/>
    <property type="match status" value="1"/>
</dbReference>
<dbReference type="PANTHER" id="PTHR23321:SF26">
    <property type="entry name" value="SMALL RIBOSOMAL SUBUNIT PROTEIN US15M"/>
    <property type="match status" value="1"/>
</dbReference>
<dbReference type="Pfam" id="PF00312">
    <property type="entry name" value="Ribosomal_S15"/>
    <property type="match status" value="1"/>
</dbReference>
<dbReference type="SMART" id="SM01387">
    <property type="entry name" value="Ribosomal_S15"/>
    <property type="match status" value="1"/>
</dbReference>
<dbReference type="SUPFAM" id="SSF47060">
    <property type="entry name" value="S15/NS1 RNA-binding domain"/>
    <property type="match status" value="1"/>
</dbReference>
<dbReference type="PROSITE" id="PS00362">
    <property type="entry name" value="RIBOSOMAL_S15"/>
    <property type="match status" value="1"/>
</dbReference>
<comment type="function">
    <text evidence="1">One of the primary rRNA binding proteins, it binds directly to 16S rRNA where it helps nucleate assembly of the platform of the 30S subunit by binding and bridging several RNA helices of the 16S rRNA.</text>
</comment>
<comment type="function">
    <text evidence="1">Forms an intersubunit bridge (bridge B4) with the 23S rRNA of the 50S subunit in the ribosome.</text>
</comment>
<comment type="subunit">
    <text evidence="1">Part of the 30S ribosomal subunit. Forms a bridge to the 50S subunit in the 70S ribosome, contacting the 23S rRNA.</text>
</comment>
<comment type="similarity">
    <text evidence="1">Belongs to the universal ribosomal protein uS15 family.</text>
</comment>
<protein>
    <recommendedName>
        <fullName evidence="1">Small ribosomal subunit protein uS15</fullName>
    </recommendedName>
    <alternativeName>
        <fullName evidence="2">30S ribosomal protein S15</fullName>
    </alternativeName>
</protein>
<reference key="1">
    <citation type="journal article" date="2005" name="PLoS Biol.">
        <title>Major structural differences and novel potential virulence mechanisms from the genomes of multiple Campylobacter species.</title>
        <authorList>
            <person name="Fouts D.E."/>
            <person name="Mongodin E.F."/>
            <person name="Mandrell R.E."/>
            <person name="Miller W.G."/>
            <person name="Rasko D.A."/>
            <person name="Ravel J."/>
            <person name="Brinkac L.M."/>
            <person name="DeBoy R.T."/>
            <person name="Parker C.T."/>
            <person name="Daugherty S.C."/>
            <person name="Dodson R.J."/>
            <person name="Durkin A.S."/>
            <person name="Madupu R."/>
            <person name="Sullivan S.A."/>
            <person name="Shetty J.U."/>
            <person name="Ayodeji M.A."/>
            <person name="Shvartsbeyn A."/>
            <person name="Schatz M.C."/>
            <person name="Badger J.H."/>
            <person name="Fraser C.M."/>
            <person name="Nelson K.E."/>
        </authorList>
    </citation>
    <scope>NUCLEOTIDE SEQUENCE [LARGE SCALE GENOMIC DNA]</scope>
    <source>
        <strain>RM1221</strain>
    </source>
</reference>
<evidence type="ECO:0000255" key="1">
    <source>
        <dbReference type="HAMAP-Rule" id="MF_01343"/>
    </source>
</evidence>
<evidence type="ECO:0000305" key="2"/>